<name>HUNB_EUSPL</name>
<comment type="function">
    <text>Gap class segmentation protein that controls development of head structures.</text>
</comment>
<comment type="subcellular location">
    <subcellularLocation>
        <location evidence="2">Nucleus</location>
    </subcellularLocation>
</comment>
<comment type="similarity">
    <text evidence="2">Belongs to the hunchback C2H2-type zinc-finger protein family.</text>
</comment>
<reference key="1">
    <citation type="journal article" date="1992" name="Proc. Natl. Acad. Sci. U.S.A.">
        <title>Evolutionary conservation pattern of zinc-finger domains of Drosophila segmentation genes.</title>
        <authorList>
            <person name="Sommer R.J."/>
            <person name="Retzlaff M."/>
            <person name="Goerlich K."/>
            <person name="Sander K."/>
            <person name="Tautz D."/>
        </authorList>
    </citation>
    <scope>NUCLEOTIDE SEQUENCE [GENOMIC DNA]</scope>
</reference>
<accession>Q02029</accession>
<sequence>HLRNHFGSKPFKCDKCSYSCVNKSMLNSHLKSHSNVYQFRCSDCAYATKYCHSLKL</sequence>
<feature type="chain" id="PRO_0000046973" description="Protein hunchback">
    <location>
        <begin position="1" status="less than"/>
        <end position="56" status="greater than"/>
    </location>
</feature>
<feature type="zinc finger region" description="C2H2-type 1" evidence="1">
    <location>
        <begin position="1" status="less than"/>
        <end position="5"/>
    </location>
</feature>
<feature type="zinc finger region" description="C2H2-type 2" evidence="1">
    <location>
        <begin position="11"/>
        <end position="33"/>
    </location>
</feature>
<feature type="zinc finger region" description="C2H2-type 3" evidence="1">
    <location>
        <begin position="39"/>
        <end position="56" status="greater than"/>
    </location>
</feature>
<feature type="non-terminal residue">
    <location>
        <position position="1"/>
    </location>
</feature>
<feature type="non-terminal residue">
    <location>
        <position position="56"/>
    </location>
</feature>
<evidence type="ECO:0000255" key="1">
    <source>
        <dbReference type="PROSITE-ProRule" id="PRU00042"/>
    </source>
</evidence>
<evidence type="ECO:0000305" key="2"/>
<gene>
    <name type="primary">hb</name>
</gene>
<keyword id="KW-0217">Developmental protein</keyword>
<keyword id="KW-0238">DNA-binding</keyword>
<keyword id="KW-0302">Gap protein</keyword>
<keyword id="KW-0479">Metal-binding</keyword>
<keyword id="KW-0539">Nucleus</keyword>
<keyword id="KW-0677">Repeat</keyword>
<keyword id="KW-0862">Zinc</keyword>
<keyword id="KW-0863">Zinc-finger</keyword>
<organism>
    <name type="scientific">Euscelis plebejus</name>
    <name type="common">Leafhopper</name>
    <dbReference type="NCBI Taxonomy" id="6827"/>
    <lineage>
        <taxon>Eukaryota</taxon>
        <taxon>Metazoa</taxon>
        <taxon>Ecdysozoa</taxon>
        <taxon>Arthropoda</taxon>
        <taxon>Hexapoda</taxon>
        <taxon>Insecta</taxon>
        <taxon>Pterygota</taxon>
        <taxon>Neoptera</taxon>
        <taxon>Paraneoptera</taxon>
        <taxon>Hemiptera</taxon>
        <taxon>Auchenorrhyncha</taxon>
        <taxon>Membracoidea</taxon>
        <taxon>Cicadellidae</taxon>
        <taxon>Deltocephalinae</taxon>
        <taxon>Athysanini</taxon>
        <taxon>Euscelis</taxon>
    </lineage>
</organism>
<proteinExistence type="inferred from homology"/>
<dbReference type="EMBL" id="L01595">
    <property type="protein sequence ID" value="AAA29120.1"/>
    <property type="molecule type" value="Genomic_DNA"/>
</dbReference>
<dbReference type="SMR" id="Q02029"/>
<dbReference type="GO" id="GO:0005634">
    <property type="term" value="C:nucleus"/>
    <property type="evidence" value="ECO:0007669"/>
    <property type="project" value="UniProtKB-SubCell"/>
</dbReference>
<dbReference type="GO" id="GO:0003677">
    <property type="term" value="F:DNA binding"/>
    <property type="evidence" value="ECO:0007669"/>
    <property type="project" value="UniProtKB-KW"/>
</dbReference>
<dbReference type="GO" id="GO:0008270">
    <property type="term" value="F:zinc ion binding"/>
    <property type="evidence" value="ECO:0007669"/>
    <property type="project" value="UniProtKB-KW"/>
</dbReference>
<dbReference type="GO" id="GO:0035282">
    <property type="term" value="P:segmentation"/>
    <property type="evidence" value="ECO:0007669"/>
    <property type="project" value="UniProtKB-KW"/>
</dbReference>
<dbReference type="FunFam" id="3.30.160.60:FF:001301">
    <property type="entry name" value="Blast:Protein hunchback"/>
    <property type="match status" value="1"/>
</dbReference>
<dbReference type="Gene3D" id="3.30.160.60">
    <property type="entry name" value="Classic Zinc Finger"/>
    <property type="match status" value="1"/>
</dbReference>
<dbReference type="InterPro" id="IPR036236">
    <property type="entry name" value="Znf_C2H2_sf"/>
</dbReference>
<dbReference type="InterPro" id="IPR013087">
    <property type="entry name" value="Znf_C2H2_type"/>
</dbReference>
<dbReference type="SMART" id="SM00355">
    <property type="entry name" value="ZnF_C2H2"/>
    <property type="match status" value="1"/>
</dbReference>
<dbReference type="SUPFAM" id="SSF57667">
    <property type="entry name" value="beta-beta-alpha zinc fingers"/>
    <property type="match status" value="1"/>
</dbReference>
<dbReference type="PROSITE" id="PS00028">
    <property type="entry name" value="ZINC_FINGER_C2H2_1"/>
    <property type="match status" value="1"/>
</dbReference>
<dbReference type="PROSITE" id="PS50157">
    <property type="entry name" value="ZINC_FINGER_C2H2_2"/>
    <property type="match status" value="1"/>
</dbReference>
<protein>
    <recommendedName>
        <fullName>Protein hunchback</fullName>
    </recommendedName>
</protein>